<geneLocation type="plasmid">
    <name>large ECE</name>
</geneLocation>
<feature type="chain" id="PRO_0000107504" description="Uncharacterized protein MJECL12">
    <location>
        <begin position="1"/>
        <end position="241"/>
    </location>
</feature>
<dbReference type="EMBL" id="L77118">
    <property type="protein sequence ID" value="AAC37085.1"/>
    <property type="molecule type" value="Genomic_DNA"/>
</dbReference>
<dbReference type="PIR" id="D64511">
    <property type="entry name" value="D64511"/>
</dbReference>
<dbReference type="RefSeq" id="WP_010890059.1">
    <property type="nucleotide sequence ID" value="NC_001732.1"/>
</dbReference>
<dbReference type="SMR" id="Q60274"/>
<dbReference type="FunCoup" id="Q60274">
    <property type="interactions" value="4"/>
</dbReference>
<dbReference type="PaxDb" id="243232-MJ_ECL12"/>
<dbReference type="EnsemblBacteria" id="AAC37085">
    <property type="protein sequence ID" value="AAC37085"/>
    <property type="gene ID" value="MJ_ECL12"/>
</dbReference>
<dbReference type="GeneID" id="1450798"/>
<dbReference type="KEGG" id="mja:MJ_ECL12"/>
<dbReference type="eggNOG" id="arCOG05094">
    <property type="taxonomic scope" value="Archaea"/>
</dbReference>
<dbReference type="HOGENOM" id="CLU_1243068_0_0_2"/>
<dbReference type="InParanoid" id="Q60274"/>
<dbReference type="OrthoDB" id="86295at2157"/>
<dbReference type="PhylomeDB" id="Q60274"/>
<dbReference type="Proteomes" id="UP000000805">
    <property type="component" value="Plasmid pDSM2661_1"/>
</dbReference>
<dbReference type="Gene3D" id="1.10.3490.10">
    <property type="entry name" value="PH0156-like"/>
    <property type="match status" value="1"/>
</dbReference>
<dbReference type="Gene3D" id="3.40.50.10620">
    <property type="entry name" value="PH0156-like domains"/>
    <property type="match status" value="1"/>
</dbReference>
<dbReference type="InterPro" id="IPR024508">
    <property type="entry name" value="DUF3226"/>
</dbReference>
<dbReference type="Pfam" id="PF11536">
    <property type="entry name" value="DUF3226"/>
    <property type="match status" value="1"/>
</dbReference>
<dbReference type="SUPFAM" id="SSF160945">
    <property type="entry name" value="PH0156-like"/>
    <property type="match status" value="1"/>
</dbReference>
<sequence>MRILLLEGITDVAFFIPILKKLYGFSEISCDGIIRAEKMGDISKPICLENEDVKLIVFHSGGKSKQKHALTAMLTAIKMGYLSNIKILGIARDIDQEHDVKNWTKSIIKNAGFEVKEGDKFLIIEDLNLKIAVLGIANYDEDDFNIPSFELKRELEAVITDMAKEISIIEKFKNSLESLSNDAERRLKPKDITHVLAIAKNFDGDSMSGLYRKFIEEQINNKNKVNFLLTLICILPCLTIF</sequence>
<protein>
    <recommendedName>
        <fullName>Uncharacterized protein MJECL12</fullName>
    </recommendedName>
</protein>
<gene>
    <name type="ordered locus">MJECL12</name>
</gene>
<name>Y3512_METJA</name>
<keyword id="KW-0614">Plasmid</keyword>
<keyword id="KW-1185">Reference proteome</keyword>
<reference key="1">
    <citation type="journal article" date="1996" name="Science">
        <title>Complete genome sequence of the methanogenic archaeon, Methanococcus jannaschii.</title>
        <authorList>
            <person name="Bult C.J."/>
            <person name="White O."/>
            <person name="Olsen G.J."/>
            <person name="Zhou L."/>
            <person name="Fleischmann R.D."/>
            <person name="Sutton G.G."/>
            <person name="Blake J.A."/>
            <person name="FitzGerald L.M."/>
            <person name="Clayton R.A."/>
            <person name="Gocayne J.D."/>
            <person name="Kerlavage A.R."/>
            <person name="Dougherty B.A."/>
            <person name="Tomb J.-F."/>
            <person name="Adams M.D."/>
            <person name="Reich C.I."/>
            <person name="Overbeek R."/>
            <person name="Kirkness E.F."/>
            <person name="Weinstock K.G."/>
            <person name="Merrick J.M."/>
            <person name="Glodek A."/>
            <person name="Scott J.L."/>
            <person name="Geoghagen N.S.M."/>
            <person name="Weidman J.F."/>
            <person name="Fuhrmann J.L."/>
            <person name="Nguyen D."/>
            <person name="Utterback T.R."/>
            <person name="Kelley J.M."/>
            <person name="Peterson J.D."/>
            <person name="Sadow P.W."/>
            <person name="Hanna M.C."/>
            <person name="Cotton M.D."/>
            <person name="Roberts K.M."/>
            <person name="Hurst M.A."/>
            <person name="Kaine B.P."/>
            <person name="Borodovsky M."/>
            <person name="Klenk H.-P."/>
            <person name="Fraser C.M."/>
            <person name="Smith H.O."/>
            <person name="Woese C.R."/>
            <person name="Venter J.C."/>
        </authorList>
    </citation>
    <scope>NUCLEOTIDE SEQUENCE [LARGE SCALE GENOMIC DNA]</scope>
    <source>
        <strain>ATCC 43067 / DSM 2661 / JAL-1 / JCM 10045 / NBRC 100440</strain>
    </source>
</reference>
<proteinExistence type="predicted"/>
<organism>
    <name type="scientific">Methanocaldococcus jannaschii (strain ATCC 43067 / DSM 2661 / JAL-1 / JCM 10045 / NBRC 100440)</name>
    <name type="common">Methanococcus jannaschii</name>
    <dbReference type="NCBI Taxonomy" id="243232"/>
    <lineage>
        <taxon>Archaea</taxon>
        <taxon>Methanobacteriati</taxon>
        <taxon>Methanobacteriota</taxon>
        <taxon>Methanomada group</taxon>
        <taxon>Methanococci</taxon>
        <taxon>Methanococcales</taxon>
        <taxon>Methanocaldococcaceae</taxon>
        <taxon>Methanocaldococcus</taxon>
    </lineage>
</organism>
<accession>Q60274</accession>